<protein>
    <recommendedName>
        <fullName>Uncharacterized protein C16orf46 homolog</fullName>
    </recommendedName>
</protein>
<name>CP046_RAT</name>
<organism>
    <name type="scientific">Rattus norvegicus</name>
    <name type="common">Rat</name>
    <dbReference type="NCBI Taxonomy" id="10116"/>
    <lineage>
        <taxon>Eukaryota</taxon>
        <taxon>Metazoa</taxon>
        <taxon>Chordata</taxon>
        <taxon>Craniata</taxon>
        <taxon>Vertebrata</taxon>
        <taxon>Euteleostomi</taxon>
        <taxon>Mammalia</taxon>
        <taxon>Eutheria</taxon>
        <taxon>Euarchontoglires</taxon>
        <taxon>Glires</taxon>
        <taxon>Rodentia</taxon>
        <taxon>Myomorpha</taxon>
        <taxon>Muroidea</taxon>
        <taxon>Muridae</taxon>
        <taxon>Murinae</taxon>
        <taxon>Rattus</taxon>
    </lineage>
</organism>
<keyword id="KW-1185">Reference proteome</keyword>
<accession>Q6AXX2</accession>
<evidence type="ECO:0000256" key="1">
    <source>
        <dbReference type="SAM" id="MobiDB-lite"/>
    </source>
</evidence>
<sequence>MDLCEESETFLENKENKKIEDAEETALTFHCPDERSERNHVCCLLGVSELTLEEDGRASEFTISTGWEEAVHGWGRTSPTACIWSKKKVRRGRVGEGTSGGSNCLFCMSLSQGSLEPRPLSAAGKLEEAAVAEVSSQKNWGSEKNWNSPSQGPASREPNKLCFPTYLHGEKKSLQMKEFIWCMEEWGIPEAVSSKACRNPSSSTDQGLSISDAVATKALVVLPPLKSSSHNLDSLSKKSRNIFWQPEEKVLGVEKDECMACPDELKGVDGKGEKAHFELASRLKVTNILPFPPTVTRTHLLSAESQRCCLHWSLLPQKSSVFPPNPTNIHYLATLQVLGQQGGQNCRTRLKAKEAKPPRTTPKHIVTEAKQESRPHVLESKVFPKPLLPSLTVSRVVIPVSTHRVL</sequence>
<dbReference type="EMBL" id="BC079279">
    <property type="protein sequence ID" value="AAH79279.1"/>
    <property type="molecule type" value="mRNA"/>
</dbReference>
<dbReference type="RefSeq" id="NP_001094485.1">
    <property type="nucleotide sequence ID" value="NM_001101015.1"/>
</dbReference>
<dbReference type="SMR" id="Q6AXX2"/>
<dbReference type="FunCoup" id="Q6AXX2">
    <property type="interactions" value="792"/>
</dbReference>
<dbReference type="PhosphoSitePlus" id="Q6AXX2"/>
<dbReference type="PaxDb" id="10116-ENSRNOP00000067219"/>
<dbReference type="Ensembl" id="ENSRNOT00000071332.3">
    <property type="protein sequence ID" value="ENSRNOP00000067219.3"/>
    <property type="gene ID" value="ENSRNOG00000045541.3"/>
</dbReference>
<dbReference type="GeneID" id="687399"/>
<dbReference type="KEGG" id="rno:687399"/>
<dbReference type="AGR" id="RGD:1586501"/>
<dbReference type="CTD" id="687399"/>
<dbReference type="RGD" id="1586501">
    <property type="gene designation" value="C19h16orf46"/>
</dbReference>
<dbReference type="eggNOG" id="ENOG502SE77">
    <property type="taxonomic scope" value="Eukaryota"/>
</dbReference>
<dbReference type="GeneTree" id="ENSGT00390000017224"/>
<dbReference type="InParanoid" id="Q6AXX2"/>
<dbReference type="OMA" id="CKEDWAT"/>
<dbReference type="OrthoDB" id="9943020at2759"/>
<dbReference type="PhylomeDB" id="Q6AXX2"/>
<dbReference type="PRO" id="PR:Q6AXX2"/>
<dbReference type="Proteomes" id="UP000002494">
    <property type="component" value="Chromosome 19"/>
</dbReference>
<dbReference type="GO" id="GO:0005829">
    <property type="term" value="C:cytosol"/>
    <property type="evidence" value="ECO:0007669"/>
    <property type="project" value="Ensembl"/>
</dbReference>
<dbReference type="GO" id="GO:0005654">
    <property type="term" value="C:nucleoplasm"/>
    <property type="evidence" value="ECO:0007669"/>
    <property type="project" value="Ensembl"/>
</dbReference>
<dbReference type="InterPro" id="IPR027836">
    <property type="entry name" value="DUF4529"/>
</dbReference>
<dbReference type="PANTHER" id="PTHR36869">
    <property type="entry name" value="CHROMOSOME 16 OPEN READING FRAME 46"/>
    <property type="match status" value="1"/>
</dbReference>
<dbReference type="PANTHER" id="PTHR36869:SF1">
    <property type="entry name" value="CHROMOSOME 16 OPEN READING FRAME 46"/>
    <property type="match status" value="1"/>
</dbReference>
<dbReference type="Pfam" id="PF15032">
    <property type="entry name" value="DUF4529"/>
    <property type="match status" value="1"/>
</dbReference>
<reference key="1">
    <citation type="journal article" date="2004" name="Genome Res.">
        <title>The status, quality, and expansion of the NIH full-length cDNA project: the Mammalian Gene Collection (MGC).</title>
        <authorList>
            <consortium name="The MGC Project Team"/>
        </authorList>
    </citation>
    <scope>NUCLEOTIDE SEQUENCE [LARGE SCALE MRNA]</scope>
    <source>
        <tissue>Testis</tissue>
    </source>
</reference>
<proteinExistence type="evidence at transcript level"/>
<feature type="chain" id="PRO_0000279432" description="Uncharacterized protein C16orf46 homolog">
    <location>
        <begin position="1"/>
        <end position="406"/>
    </location>
</feature>
<feature type="region of interest" description="Disordered" evidence="1">
    <location>
        <begin position="136"/>
        <end position="157"/>
    </location>
</feature>
<feature type="compositionally biased region" description="Polar residues" evidence="1">
    <location>
        <begin position="136"/>
        <end position="153"/>
    </location>
</feature>